<gene>
    <name type="ordered locus">Cphy_1933</name>
</gene>
<protein>
    <recommendedName>
        <fullName evidence="1">dTTP/UTP pyrophosphatase</fullName>
        <shortName evidence="1">dTTPase/UTPase</shortName>
        <ecNumber evidence="1">3.6.1.9</ecNumber>
    </recommendedName>
    <alternativeName>
        <fullName evidence="1">Nucleoside triphosphate pyrophosphatase</fullName>
    </alternativeName>
    <alternativeName>
        <fullName evidence="1">Nucleotide pyrophosphatase</fullName>
        <shortName evidence="1">Nucleotide PPase</shortName>
    </alternativeName>
</protein>
<feature type="chain" id="PRO_1000081713" description="dTTP/UTP pyrophosphatase">
    <location>
        <begin position="1"/>
        <end position="197"/>
    </location>
</feature>
<feature type="active site" description="Proton acceptor" evidence="1">
    <location>
        <position position="69"/>
    </location>
</feature>
<feature type="site" description="Important for substrate specificity" evidence="1">
    <location>
        <position position="12"/>
    </location>
</feature>
<feature type="site" description="Important for substrate specificity" evidence="1">
    <location>
        <position position="70"/>
    </location>
</feature>
<feature type="site" description="Important for substrate specificity" evidence="1">
    <location>
        <position position="157"/>
    </location>
</feature>
<reference key="1">
    <citation type="submission" date="2007-11" db="EMBL/GenBank/DDBJ databases">
        <title>Complete genome sequence of Clostridium phytofermentans ISDg.</title>
        <authorList>
            <person name="Leschine S.B."/>
            <person name="Warnick T.A."/>
            <person name="Blanchard J.L."/>
            <person name="Schnell D.J."/>
            <person name="Petit E.L."/>
            <person name="LaTouf W.G."/>
            <person name="Copeland A."/>
            <person name="Lucas S."/>
            <person name="Lapidus A."/>
            <person name="Barry K."/>
            <person name="Glavina del Rio T."/>
            <person name="Dalin E."/>
            <person name="Tice H."/>
            <person name="Pitluck S."/>
            <person name="Kiss H."/>
            <person name="Brettin T."/>
            <person name="Bruce D."/>
            <person name="Detter J.C."/>
            <person name="Han C."/>
            <person name="Kuske C."/>
            <person name="Schmutz J."/>
            <person name="Larimer F."/>
            <person name="Land M."/>
            <person name="Hauser L."/>
            <person name="Kyrpides N."/>
            <person name="Kim E.A."/>
            <person name="Richardson P."/>
        </authorList>
    </citation>
    <scope>NUCLEOTIDE SEQUENCE [LARGE SCALE GENOMIC DNA]</scope>
    <source>
        <strain>ATCC 700394 / DSM 18823 / ISDg</strain>
    </source>
</reference>
<dbReference type="EC" id="3.6.1.9" evidence="1"/>
<dbReference type="EMBL" id="CP000885">
    <property type="protein sequence ID" value="ABX42301.1"/>
    <property type="molecule type" value="Genomic_DNA"/>
</dbReference>
<dbReference type="RefSeq" id="WP_012199955.1">
    <property type="nucleotide sequence ID" value="NC_010001.1"/>
</dbReference>
<dbReference type="SMR" id="A9KHL6"/>
<dbReference type="STRING" id="357809.Cphy_1933"/>
<dbReference type="KEGG" id="cpy:Cphy_1933"/>
<dbReference type="eggNOG" id="COG0424">
    <property type="taxonomic scope" value="Bacteria"/>
</dbReference>
<dbReference type="HOGENOM" id="CLU_040416_0_0_9"/>
<dbReference type="OrthoDB" id="9807767at2"/>
<dbReference type="Proteomes" id="UP000000370">
    <property type="component" value="Chromosome"/>
</dbReference>
<dbReference type="GO" id="GO:0005737">
    <property type="term" value="C:cytoplasm"/>
    <property type="evidence" value="ECO:0007669"/>
    <property type="project" value="UniProtKB-SubCell"/>
</dbReference>
<dbReference type="GO" id="GO:0036218">
    <property type="term" value="F:dTTP diphosphatase activity"/>
    <property type="evidence" value="ECO:0007669"/>
    <property type="project" value="RHEA"/>
</dbReference>
<dbReference type="GO" id="GO:0036221">
    <property type="term" value="F:UTP diphosphatase activity"/>
    <property type="evidence" value="ECO:0007669"/>
    <property type="project" value="RHEA"/>
</dbReference>
<dbReference type="GO" id="GO:0009117">
    <property type="term" value="P:nucleotide metabolic process"/>
    <property type="evidence" value="ECO:0007669"/>
    <property type="project" value="UniProtKB-KW"/>
</dbReference>
<dbReference type="CDD" id="cd00555">
    <property type="entry name" value="Maf"/>
    <property type="match status" value="1"/>
</dbReference>
<dbReference type="Gene3D" id="3.90.950.10">
    <property type="match status" value="1"/>
</dbReference>
<dbReference type="HAMAP" id="MF_00528">
    <property type="entry name" value="Maf"/>
    <property type="match status" value="1"/>
</dbReference>
<dbReference type="InterPro" id="IPR029001">
    <property type="entry name" value="ITPase-like_fam"/>
</dbReference>
<dbReference type="InterPro" id="IPR003697">
    <property type="entry name" value="Maf-like"/>
</dbReference>
<dbReference type="NCBIfam" id="TIGR00172">
    <property type="entry name" value="maf"/>
    <property type="match status" value="1"/>
</dbReference>
<dbReference type="PANTHER" id="PTHR43213">
    <property type="entry name" value="BIFUNCTIONAL DTTP/UTP PYROPHOSPHATASE/METHYLTRANSFERASE PROTEIN-RELATED"/>
    <property type="match status" value="1"/>
</dbReference>
<dbReference type="PANTHER" id="PTHR43213:SF5">
    <property type="entry name" value="BIFUNCTIONAL DTTP_UTP PYROPHOSPHATASE_METHYLTRANSFERASE PROTEIN-RELATED"/>
    <property type="match status" value="1"/>
</dbReference>
<dbReference type="Pfam" id="PF02545">
    <property type="entry name" value="Maf"/>
    <property type="match status" value="1"/>
</dbReference>
<dbReference type="PIRSF" id="PIRSF006305">
    <property type="entry name" value="Maf"/>
    <property type="match status" value="1"/>
</dbReference>
<dbReference type="SUPFAM" id="SSF52972">
    <property type="entry name" value="ITPase-like"/>
    <property type="match status" value="1"/>
</dbReference>
<accession>A9KHL6</accession>
<proteinExistence type="inferred from homology"/>
<name>NTPPA_LACP7</name>
<organism>
    <name type="scientific">Lachnoclostridium phytofermentans (strain ATCC 700394 / DSM 18823 / ISDg)</name>
    <name type="common">Clostridium phytofermentans</name>
    <dbReference type="NCBI Taxonomy" id="357809"/>
    <lineage>
        <taxon>Bacteria</taxon>
        <taxon>Bacillati</taxon>
        <taxon>Bacillota</taxon>
        <taxon>Clostridia</taxon>
        <taxon>Lachnospirales</taxon>
        <taxon>Lachnospiraceae</taxon>
    </lineage>
</organism>
<keyword id="KW-0963">Cytoplasm</keyword>
<keyword id="KW-0378">Hydrolase</keyword>
<keyword id="KW-0546">Nucleotide metabolism</keyword>
<keyword id="KW-1185">Reference proteome</keyword>
<sequence length="197" mass="22171">MYQIVLASGSPRRKEILSQVGINFTVCVSNMEEITSETLPENIVMELSKMKAHDIAKQYETNTIIIGSDTIVAYKNQILGKPKNEDHAKEMLQLLSGVTHEVYTGVTVIIKNDSGEVEERTFFEISKVTVSDLTEEEIMDYIKSKEPMDKAGAYAVQGRFAAHVTRIEGDYYTIVGLPIARLYQEVKKFGIDLVKQM</sequence>
<comment type="function">
    <text evidence="1">Nucleoside triphosphate pyrophosphatase that hydrolyzes dTTP and UTP. May have a dual role in cell division arrest and in preventing the incorporation of modified nucleotides into cellular nucleic acids.</text>
</comment>
<comment type="catalytic activity">
    <reaction evidence="1">
        <text>dTTP + H2O = dTMP + diphosphate + H(+)</text>
        <dbReference type="Rhea" id="RHEA:28534"/>
        <dbReference type="ChEBI" id="CHEBI:15377"/>
        <dbReference type="ChEBI" id="CHEBI:15378"/>
        <dbReference type="ChEBI" id="CHEBI:33019"/>
        <dbReference type="ChEBI" id="CHEBI:37568"/>
        <dbReference type="ChEBI" id="CHEBI:63528"/>
        <dbReference type="EC" id="3.6.1.9"/>
    </reaction>
</comment>
<comment type="catalytic activity">
    <reaction evidence="1">
        <text>UTP + H2O = UMP + diphosphate + H(+)</text>
        <dbReference type="Rhea" id="RHEA:29395"/>
        <dbReference type="ChEBI" id="CHEBI:15377"/>
        <dbReference type="ChEBI" id="CHEBI:15378"/>
        <dbReference type="ChEBI" id="CHEBI:33019"/>
        <dbReference type="ChEBI" id="CHEBI:46398"/>
        <dbReference type="ChEBI" id="CHEBI:57865"/>
        <dbReference type="EC" id="3.6.1.9"/>
    </reaction>
</comment>
<comment type="cofactor">
    <cofactor evidence="1">
        <name>a divalent metal cation</name>
        <dbReference type="ChEBI" id="CHEBI:60240"/>
    </cofactor>
</comment>
<comment type="subcellular location">
    <subcellularLocation>
        <location evidence="1">Cytoplasm</location>
    </subcellularLocation>
</comment>
<comment type="similarity">
    <text evidence="1">Belongs to the Maf family. YhdE subfamily.</text>
</comment>
<evidence type="ECO:0000255" key="1">
    <source>
        <dbReference type="HAMAP-Rule" id="MF_00528"/>
    </source>
</evidence>